<evidence type="ECO:0000250" key="1"/>
<evidence type="ECO:0000255" key="2">
    <source>
        <dbReference type="HAMAP-Rule" id="MF_01109"/>
    </source>
</evidence>
<proteinExistence type="inferred from homology"/>
<keyword id="KW-0056">Arginine metabolism</keyword>
<keyword id="KW-0963">Cytoplasm</keyword>
<keyword id="KW-1185">Reference proteome</keyword>
<keyword id="KW-0808">Transferase</keyword>
<feature type="chain" id="PRO_1000084834" description="Ornithine carbamoyltransferase">
    <location>
        <begin position="1"/>
        <end position="311"/>
    </location>
</feature>
<feature type="binding site" evidence="2">
    <location>
        <begin position="54"/>
        <end position="57"/>
    </location>
    <ligand>
        <name>carbamoyl phosphate</name>
        <dbReference type="ChEBI" id="CHEBI:58228"/>
    </ligand>
</feature>
<feature type="binding site" evidence="2">
    <location>
        <position position="81"/>
    </location>
    <ligand>
        <name>carbamoyl phosphate</name>
        <dbReference type="ChEBI" id="CHEBI:58228"/>
    </ligand>
</feature>
<feature type="binding site" evidence="2">
    <location>
        <position position="105"/>
    </location>
    <ligand>
        <name>carbamoyl phosphate</name>
        <dbReference type="ChEBI" id="CHEBI:58228"/>
    </ligand>
</feature>
<feature type="binding site" evidence="2">
    <location>
        <begin position="132"/>
        <end position="135"/>
    </location>
    <ligand>
        <name>carbamoyl phosphate</name>
        <dbReference type="ChEBI" id="CHEBI:58228"/>
    </ligand>
</feature>
<feature type="binding site" evidence="2">
    <location>
        <position position="163"/>
    </location>
    <ligand>
        <name>L-ornithine</name>
        <dbReference type="ChEBI" id="CHEBI:46911"/>
    </ligand>
</feature>
<feature type="binding site" evidence="2">
    <location>
        <position position="221"/>
    </location>
    <ligand>
        <name>L-ornithine</name>
        <dbReference type="ChEBI" id="CHEBI:46911"/>
    </ligand>
</feature>
<feature type="binding site" evidence="2">
    <location>
        <begin position="225"/>
        <end position="226"/>
    </location>
    <ligand>
        <name>L-ornithine</name>
        <dbReference type="ChEBI" id="CHEBI:46911"/>
    </ligand>
</feature>
<feature type="binding site" evidence="2">
    <location>
        <begin position="261"/>
        <end position="262"/>
    </location>
    <ligand>
        <name>carbamoyl phosphate</name>
        <dbReference type="ChEBI" id="CHEBI:58228"/>
    </ligand>
</feature>
<feature type="binding site" evidence="2">
    <location>
        <position position="289"/>
    </location>
    <ligand>
        <name>carbamoyl phosphate</name>
        <dbReference type="ChEBI" id="CHEBI:58228"/>
    </ligand>
</feature>
<name>OTC_AZOSB</name>
<dbReference type="EC" id="2.1.3.3" evidence="2"/>
<dbReference type="EMBL" id="AM406670">
    <property type="protein sequence ID" value="CAL94804.1"/>
    <property type="molecule type" value="Genomic_DNA"/>
</dbReference>
<dbReference type="RefSeq" id="WP_011765918.1">
    <property type="nucleotide sequence ID" value="NC_008702.1"/>
</dbReference>
<dbReference type="SMR" id="A1K7J9"/>
<dbReference type="STRING" id="62928.azo2187"/>
<dbReference type="KEGG" id="aoa:dqs_2320"/>
<dbReference type="KEGG" id="azo:azo2187"/>
<dbReference type="eggNOG" id="COG0078">
    <property type="taxonomic scope" value="Bacteria"/>
</dbReference>
<dbReference type="HOGENOM" id="CLU_043846_3_2_4"/>
<dbReference type="OrthoDB" id="9802587at2"/>
<dbReference type="UniPathway" id="UPA00254">
    <property type="reaction ID" value="UER00365"/>
</dbReference>
<dbReference type="Proteomes" id="UP000002588">
    <property type="component" value="Chromosome"/>
</dbReference>
<dbReference type="GO" id="GO:0005737">
    <property type="term" value="C:cytoplasm"/>
    <property type="evidence" value="ECO:0007669"/>
    <property type="project" value="UniProtKB-SubCell"/>
</dbReference>
<dbReference type="GO" id="GO:0016597">
    <property type="term" value="F:amino acid binding"/>
    <property type="evidence" value="ECO:0007669"/>
    <property type="project" value="InterPro"/>
</dbReference>
<dbReference type="GO" id="GO:0004585">
    <property type="term" value="F:ornithine carbamoyltransferase activity"/>
    <property type="evidence" value="ECO:0007669"/>
    <property type="project" value="UniProtKB-UniRule"/>
</dbReference>
<dbReference type="GO" id="GO:0042450">
    <property type="term" value="P:arginine biosynthetic process via ornithine"/>
    <property type="evidence" value="ECO:0007669"/>
    <property type="project" value="TreeGrafter"/>
</dbReference>
<dbReference type="GO" id="GO:0019547">
    <property type="term" value="P:arginine catabolic process to ornithine"/>
    <property type="evidence" value="ECO:0007669"/>
    <property type="project" value="UniProtKB-UniRule"/>
</dbReference>
<dbReference type="GO" id="GO:0019240">
    <property type="term" value="P:citrulline biosynthetic process"/>
    <property type="evidence" value="ECO:0007669"/>
    <property type="project" value="TreeGrafter"/>
</dbReference>
<dbReference type="FunFam" id="3.40.50.1370:FF:000008">
    <property type="entry name" value="Ornithine carbamoyltransferase"/>
    <property type="match status" value="1"/>
</dbReference>
<dbReference type="Gene3D" id="3.40.50.1370">
    <property type="entry name" value="Aspartate/ornithine carbamoyltransferase"/>
    <property type="match status" value="2"/>
</dbReference>
<dbReference type="HAMAP" id="MF_01109">
    <property type="entry name" value="OTCase"/>
    <property type="match status" value="1"/>
</dbReference>
<dbReference type="InterPro" id="IPR006132">
    <property type="entry name" value="Asp/Orn_carbamoyltranf_P-bd"/>
</dbReference>
<dbReference type="InterPro" id="IPR006130">
    <property type="entry name" value="Asp/Orn_carbamoylTrfase"/>
</dbReference>
<dbReference type="InterPro" id="IPR036901">
    <property type="entry name" value="Asp/Orn_carbamoylTrfase_sf"/>
</dbReference>
<dbReference type="InterPro" id="IPR006131">
    <property type="entry name" value="Asp_carbamoyltransf_Asp/Orn-bd"/>
</dbReference>
<dbReference type="InterPro" id="IPR002292">
    <property type="entry name" value="Orn/put_carbamltrans"/>
</dbReference>
<dbReference type="InterPro" id="IPR024904">
    <property type="entry name" value="OTCase_ArgI"/>
</dbReference>
<dbReference type="NCBIfam" id="TIGR00658">
    <property type="entry name" value="orni_carb_tr"/>
    <property type="match status" value="1"/>
</dbReference>
<dbReference type="NCBIfam" id="NF001986">
    <property type="entry name" value="PRK00779.1"/>
    <property type="match status" value="1"/>
</dbReference>
<dbReference type="PANTHER" id="PTHR45753">
    <property type="entry name" value="ORNITHINE CARBAMOYLTRANSFERASE, MITOCHONDRIAL"/>
    <property type="match status" value="1"/>
</dbReference>
<dbReference type="PANTHER" id="PTHR45753:SF3">
    <property type="entry name" value="ORNITHINE TRANSCARBAMYLASE, MITOCHONDRIAL"/>
    <property type="match status" value="1"/>
</dbReference>
<dbReference type="Pfam" id="PF00185">
    <property type="entry name" value="OTCace"/>
    <property type="match status" value="1"/>
</dbReference>
<dbReference type="Pfam" id="PF02729">
    <property type="entry name" value="OTCace_N"/>
    <property type="match status" value="1"/>
</dbReference>
<dbReference type="PRINTS" id="PR00100">
    <property type="entry name" value="AOTCASE"/>
</dbReference>
<dbReference type="PRINTS" id="PR00102">
    <property type="entry name" value="OTCASE"/>
</dbReference>
<dbReference type="SUPFAM" id="SSF53671">
    <property type="entry name" value="Aspartate/ornithine carbamoyltransferase"/>
    <property type="match status" value="1"/>
</dbReference>
<dbReference type="PROSITE" id="PS00097">
    <property type="entry name" value="CARBAMOYLTRANSFERASE"/>
    <property type="match status" value="1"/>
</dbReference>
<protein>
    <recommendedName>
        <fullName evidence="2">Ornithine carbamoyltransferase</fullName>
        <shortName evidence="2">OTCase</shortName>
        <ecNumber evidence="2">2.1.3.3</ecNumber>
    </recommendedName>
</protein>
<sequence length="311" mass="35240">MSSPRHYLQFSDFTAAEYDHVFQRTRWIKEKFKQYEPYHPLFDRTLVMIFEKASTRTRLSFEAGMQQLGGSAIYLNTRDSQLGRGEPVEDAAQVISRMSDLVMIRTFEQDIIERFAAYSRVPVINGLTNEYHPCQILADIYTFIEHRGSIKGKTVAWVGDSNNMCNTWLQAAEVLDFKVRVSTPPGYEVEPTDAGLRGTAHFAQFSDPLEACRGADLVTTDVWTSMGFEAENEARMKAFADWCVDAEMMSVAAPDALFMHCLPAHRGEEVTAEVIDGPQSVVWDEAENRLHVQKALMEYLVLGRVGDEESN</sequence>
<reference key="1">
    <citation type="journal article" date="2006" name="Nat. Biotechnol.">
        <title>Complete genome of the mutualistic, N2-fixing grass endophyte Azoarcus sp. strain BH72.</title>
        <authorList>
            <person name="Krause A."/>
            <person name="Ramakumar A."/>
            <person name="Bartels D."/>
            <person name="Battistoni F."/>
            <person name="Bekel T."/>
            <person name="Boch J."/>
            <person name="Boehm M."/>
            <person name="Friedrich F."/>
            <person name="Hurek T."/>
            <person name="Krause L."/>
            <person name="Linke B."/>
            <person name="McHardy A.C."/>
            <person name="Sarkar A."/>
            <person name="Schneiker S."/>
            <person name="Syed A.A."/>
            <person name="Thauer R."/>
            <person name="Vorhoelter F.-J."/>
            <person name="Weidner S."/>
            <person name="Puehler A."/>
            <person name="Reinhold-Hurek B."/>
            <person name="Kaiser O."/>
            <person name="Goesmann A."/>
        </authorList>
    </citation>
    <scope>NUCLEOTIDE SEQUENCE [LARGE SCALE GENOMIC DNA]</scope>
    <source>
        <strain>BH72</strain>
    </source>
</reference>
<gene>
    <name evidence="2" type="primary">arcB</name>
    <name type="ordered locus">azo2187</name>
</gene>
<organism>
    <name type="scientific">Azoarcus sp. (strain BH72)</name>
    <dbReference type="NCBI Taxonomy" id="418699"/>
    <lineage>
        <taxon>Bacteria</taxon>
        <taxon>Pseudomonadati</taxon>
        <taxon>Pseudomonadota</taxon>
        <taxon>Betaproteobacteria</taxon>
        <taxon>Rhodocyclales</taxon>
        <taxon>Zoogloeaceae</taxon>
        <taxon>Azoarcus</taxon>
    </lineage>
</organism>
<accession>A1K7J9</accession>
<comment type="function">
    <text evidence="1">Reversibly catalyzes the transfer of the carbamoyl group from carbamoyl phosphate (CP) to the N(epsilon) atom of ornithine (ORN) to produce L-citrulline.</text>
</comment>
<comment type="catalytic activity">
    <reaction evidence="2">
        <text>carbamoyl phosphate + L-ornithine = L-citrulline + phosphate + H(+)</text>
        <dbReference type="Rhea" id="RHEA:19513"/>
        <dbReference type="ChEBI" id="CHEBI:15378"/>
        <dbReference type="ChEBI" id="CHEBI:43474"/>
        <dbReference type="ChEBI" id="CHEBI:46911"/>
        <dbReference type="ChEBI" id="CHEBI:57743"/>
        <dbReference type="ChEBI" id="CHEBI:58228"/>
        <dbReference type="EC" id="2.1.3.3"/>
    </reaction>
</comment>
<comment type="pathway">
    <text evidence="2">Amino-acid degradation; L-arginine degradation via ADI pathway; carbamoyl phosphate from L-arginine: step 2/2.</text>
</comment>
<comment type="subcellular location">
    <subcellularLocation>
        <location evidence="2">Cytoplasm</location>
    </subcellularLocation>
</comment>
<comment type="similarity">
    <text evidence="2">Belongs to the aspartate/ornithine carbamoyltransferase superfamily. OTCase family.</text>
</comment>